<feature type="chain" id="PRO_1000074076" description="Holliday junction branch migration complex subunit RuvB">
    <location>
        <begin position="1"/>
        <end position="350"/>
    </location>
</feature>
<feature type="region of interest" description="Large ATPase domain (RuvB-L)" evidence="1">
    <location>
        <begin position="1"/>
        <end position="183"/>
    </location>
</feature>
<feature type="region of interest" description="Small ATPAse domain (RuvB-S)" evidence="1">
    <location>
        <begin position="184"/>
        <end position="254"/>
    </location>
</feature>
<feature type="region of interest" description="Head domain (RuvB-H)" evidence="1">
    <location>
        <begin position="257"/>
        <end position="350"/>
    </location>
</feature>
<feature type="region of interest" description="Disordered" evidence="2">
    <location>
        <begin position="331"/>
        <end position="350"/>
    </location>
</feature>
<feature type="binding site" evidence="1">
    <location>
        <position position="22"/>
    </location>
    <ligand>
        <name>ATP</name>
        <dbReference type="ChEBI" id="CHEBI:30616"/>
    </ligand>
</feature>
<feature type="binding site" evidence="1">
    <location>
        <position position="23"/>
    </location>
    <ligand>
        <name>ATP</name>
        <dbReference type="ChEBI" id="CHEBI:30616"/>
    </ligand>
</feature>
<feature type="binding site" evidence="1">
    <location>
        <position position="64"/>
    </location>
    <ligand>
        <name>ATP</name>
        <dbReference type="ChEBI" id="CHEBI:30616"/>
    </ligand>
</feature>
<feature type="binding site" evidence="1">
    <location>
        <position position="67"/>
    </location>
    <ligand>
        <name>ATP</name>
        <dbReference type="ChEBI" id="CHEBI:30616"/>
    </ligand>
</feature>
<feature type="binding site" evidence="1">
    <location>
        <position position="68"/>
    </location>
    <ligand>
        <name>ATP</name>
        <dbReference type="ChEBI" id="CHEBI:30616"/>
    </ligand>
</feature>
<feature type="binding site" evidence="1">
    <location>
        <position position="68"/>
    </location>
    <ligand>
        <name>Mg(2+)</name>
        <dbReference type="ChEBI" id="CHEBI:18420"/>
    </ligand>
</feature>
<feature type="binding site" evidence="1">
    <location>
        <position position="69"/>
    </location>
    <ligand>
        <name>ATP</name>
        <dbReference type="ChEBI" id="CHEBI:30616"/>
    </ligand>
</feature>
<feature type="binding site" evidence="1">
    <location>
        <begin position="130"/>
        <end position="132"/>
    </location>
    <ligand>
        <name>ATP</name>
        <dbReference type="ChEBI" id="CHEBI:30616"/>
    </ligand>
</feature>
<feature type="binding site" evidence="1">
    <location>
        <position position="173"/>
    </location>
    <ligand>
        <name>ATP</name>
        <dbReference type="ChEBI" id="CHEBI:30616"/>
    </ligand>
</feature>
<feature type="binding site" evidence="1">
    <location>
        <position position="183"/>
    </location>
    <ligand>
        <name>ATP</name>
        <dbReference type="ChEBI" id="CHEBI:30616"/>
    </ligand>
</feature>
<feature type="binding site" evidence="1">
    <location>
        <position position="220"/>
    </location>
    <ligand>
        <name>ATP</name>
        <dbReference type="ChEBI" id="CHEBI:30616"/>
    </ligand>
</feature>
<feature type="binding site" evidence="1">
    <location>
        <position position="312"/>
    </location>
    <ligand>
        <name>DNA</name>
        <dbReference type="ChEBI" id="CHEBI:16991"/>
    </ligand>
</feature>
<feature type="binding site" evidence="1">
    <location>
        <position position="317"/>
    </location>
    <ligand>
        <name>DNA</name>
        <dbReference type="ChEBI" id="CHEBI:16991"/>
    </ligand>
</feature>
<dbReference type="EC" id="3.6.4.-" evidence="1"/>
<dbReference type="EMBL" id="CP000909">
    <property type="protein sequence ID" value="ABY36284.1"/>
    <property type="molecule type" value="Genomic_DNA"/>
</dbReference>
<dbReference type="RefSeq" id="WP_012258937.1">
    <property type="nucleotide sequence ID" value="NC_010175.1"/>
</dbReference>
<dbReference type="RefSeq" id="YP_001636673.1">
    <property type="nucleotide sequence ID" value="NC_010175.1"/>
</dbReference>
<dbReference type="SMR" id="A9WHF8"/>
<dbReference type="FunCoup" id="A9WHF8">
    <property type="interactions" value="380"/>
</dbReference>
<dbReference type="STRING" id="324602.Caur_3085"/>
<dbReference type="EnsemblBacteria" id="ABY36284">
    <property type="protein sequence ID" value="ABY36284"/>
    <property type="gene ID" value="Caur_3085"/>
</dbReference>
<dbReference type="KEGG" id="cau:Caur_3085"/>
<dbReference type="PATRIC" id="fig|324602.8.peg.3488"/>
<dbReference type="eggNOG" id="COG2255">
    <property type="taxonomic scope" value="Bacteria"/>
</dbReference>
<dbReference type="HOGENOM" id="CLU_055599_1_0_0"/>
<dbReference type="InParanoid" id="A9WHF8"/>
<dbReference type="Proteomes" id="UP000002008">
    <property type="component" value="Chromosome"/>
</dbReference>
<dbReference type="GO" id="GO:0005737">
    <property type="term" value="C:cytoplasm"/>
    <property type="evidence" value="ECO:0007669"/>
    <property type="project" value="UniProtKB-SubCell"/>
</dbReference>
<dbReference type="GO" id="GO:0048476">
    <property type="term" value="C:Holliday junction resolvase complex"/>
    <property type="evidence" value="ECO:0007669"/>
    <property type="project" value="UniProtKB-UniRule"/>
</dbReference>
<dbReference type="GO" id="GO:0005524">
    <property type="term" value="F:ATP binding"/>
    <property type="evidence" value="ECO:0007669"/>
    <property type="project" value="UniProtKB-UniRule"/>
</dbReference>
<dbReference type="GO" id="GO:0016887">
    <property type="term" value="F:ATP hydrolysis activity"/>
    <property type="evidence" value="ECO:0007669"/>
    <property type="project" value="InterPro"/>
</dbReference>
<dbReference type="GO" id="GO:0000400">
    <property type="term" value="F:four-way junction DNA binding"/>
    <property type="evidence" value="ECO:0007669"/>
    <property type="project" value="UniProtKB-UniRule"/>
</dbReference>
<dbReference type="GO" id="GO:0009378">
    <property type="term" value="F:four-way junction helicase activity"/>
    <property type="evidence" value="ECO:0007669"/>
    <property type="project" value="InterPro"/>
</dbReference>
<dbReference type="GO" id="GO:0006310">
    <property type="term" value="P:DNA recombination"/>
    <property type="evidence" value="ECO:0007669"/>
    <property type="project" value="UniProtKB-UniRule"/>
</dbReference>
<dbReference type="GO" id="GO:0006281">
    <property type="term" value="P:DNA repair"/>
    <property type="evidence" value="ECO:0007669"/>
    <property type="project" value="UniProtKB-UniRule"/>
</dbReference>
<dbReference type="CDD" id="cd00009">
    <property type="entry name" value="AAA"/>
    <property type="match status" value="1"/>
</dbReference>
<dbReference type="Gene3D" id="1.10.8.60">
    <property type="match status" value="1"/>
</dbReference>
<dbReference type="Gene3D" id="3.40.50.300">
    <property type="entry name" value="P-loop containing nucleotide triphosphate hydrolases"/>
    <property type="match status" value="1"/>
</dbReference>
<dbReference type="Gene3D" id="1.10.10.10">
    <property type="entry name" value="Winged helix-like DNA-binding domain superfamily/Winged helix DNA-binding domain"/>
    <property type="match status" value="1"/>
</dbReference>
<dbReference type="HAMAP" id="MF_00016">
    <property type="entry name" value="DNA_HJ_migration_RuvB"/>
    <property type="match status" value="1"/>
</dbReference>
<dbReference type="InterPro" id="IPR003593">
    <property type="entry name" value="AAA+_ATPase"/>
</dbReference>
<dbReference type="InterPro" id="IPR041445">
    <property type="entry name" value="AAA_lid_4"/>
</dbReference>
<dbReference type="InterPro" id="IPR004605">
    <property type="entry name" value="DNA_helicase_Holl-junc_RuvB"/>
</dbReference>
<dbReference type="InterPro" id="IPR027417">
    <property type="entry name" value="P-loop_NTPase"/>
</dbReference>
<dbReference type="InterPro" id="IPR008824">
    <property type="entry name" value="RuvB-like_N"/>
</dbReference>
<dbReference type="InterPro" id="IPR008823">
    <property type="entry name" value="RuvB_C"/>
</dbReference>
<dbReference type="InterPro" id="IPR036388">
    <property type="entry name" value="WH-like_DNA-bd_sf"/>
</dbReference>
<dbReference type="InterPro" id="IPR036390">
    <property type="entry name" value="WH_DNA-bd_sf"/>
</dbReference>
<dbReference type="NCBIfam" id="NF000868">
    <property type="entry name" value="PRK00080.1"/>
    <property type="match status" value="1"/>
</dbReference>
<dbReference type="NCBIfam" id="TIGR00635">
    <property type="entry name" value="ruvB"/>
    <property type="match status" value="1"/>
</dbReference>
<dbReference type="PANTHER" id="PTHR42848">
    <property type="match status" value="1"/>
</dbReference>
<dbReference type="PANTHER" id="PTHR42848:SF1">
    <property type="entry name" value="HOLLIDAY JUNCTION BRANCH MIGRATION COMPLEX SUBUNIT RUVB"/>
    <property type="match status" value="1"/>
</dbReference>
<dbReference type="Pfam" id="PF17864">
    <property type="entry name" value="AAA_lid_4"/>
    <property type="match status" value="1"/>
</dbReference>
<dbReference type="Pfam" id="PF05491">
    <property type="entry name" value="RuvB_C"/>
    <property type="match status" value="1"/>
</dbReference>
<dbReference type="Pfam" id="PF05496">
    <property type="entry name" value="RuvB_N"/>
    <property type="match status" value="1"/>
</dbReference>
<dbReference type="SMART" id="SM00382">
    <property type="entry name" value="AAA"/>
    <property type="match status" value="1"/>
</dbReference>
<dbReference type="SUPFAM" id="SSF52540">
    <property type="entry name" value="P-loop containing nucleoside triphosphate hydrolases"/>
    <property type="match status" value="1"/>
</dbReference>
<dbReference type="SUPFAM" id="SSF46785">
    <property type="entry name" value="Winged helix' DNA-binding domain"/>
    <property type="match status" value="1"/>
</dbReference>
<organism>
    <name type="scientific">Chloroflexus aurantiacus (strain ATCC 29366 / DSM 635 / J-10-fl)</name>
    <dbReference type="NCBI Taxonomy" id="324602"/>
    <lineage>
        <taxon>Bacteria</taxon>
        <taxon>Bacillati</taxon>
        <taxon>Chloroflexota</taxon>
        <taxon>Chloroflexia</taxon>
        <taxon>Chloroflexales</taxon>
        <taxon>Chloroflexineae</taxon>
        <taxon>Chloroflexaceae</taxon>
        <taxon>Chloroflexus</taxon>
    </lineage>
</organism>
<accession>A9WHF8</accession>
<keyword id="KW-0067">ATP-binding</keyword>
<keyword id="KW-0963">Cytoplasm</keyword>
<keyword id="KW-0227">DNA damage</keyword>
<keyword id="KW-0233">DNA recombination</keyword>
<keyword id="KW-0234">DNA repair</keyword>
<keyword id="KW-0238">DNA-binding</keyword>
<keyword id="KW-0378">Hydrolase</keyword>
<keyword id="KW-0547">Nucleotide-binding</keyword>
<keyword id="KW-1185">Reference proteome</keyword>
<evidence type="ECO:0000255" key="1">
    <source>
        <dbReference type="HAMAP-Rule" id="MF_00016"/>
    </source>
</evidence>
<evidence type="ECO:0000256" key="2">
    <source>
        <dbReference type="SAM" id="MobiDB-lite"/>
    </source>
</evidence>
<proteinExistence type="inferred from homology"/>
<sequence>MSAERLVNPHSDSDDQQVEKSLRPRTLSEFIGQEKVVEQLRIAIAAARGRNESLDHTLFYGPPGLGKTSLANVVANEMGAKIKITSGPAIERAGDLAAILTNLQANDVLFIDEVHRLNRAVEEVLYPAMEDFALDLVVGKGPGARSLRLNLPRFTVIGATTRLALLTSPLRDRFVAVHRLVFYSDDAMTEIVSRSARILGVPISPEGAREIGRRARGTPRIANRILRRVRDYAQVVADGAITLQVARDALAQLEIDELGLDENDRRLLRAIIELFNGGPVGLSTLAAALAEEVDAIEDVYEPFLLQLGFLQRTPRGRIATRRAYEHLGLPYPERTLPADDESGPQQATLF</sequence>
<name>RUVB_CHLAA</name>
<reference key="1">
    <citation type="journal article" date="2011" name="BMC Genomics">
        <title>Complete genome sequence of the filamentous anoxygenic phototrophic bacterium Chloroflexus aurantiacus.</title>
        <authorList>
            <person name="Tang K.H."/>
            <person name="Barry K."/>
            <person name="Chertkov O."/>
            <person name="Dalin E."/>
            <person name="Han C.S."/>
            <person name="Hauser L.J."/>
            <person name="Honchak B.M."/>
            <person name="Karbach L.E."/>
            <person name="Land M.L."/>
            <person name="Lapidus A."/>
            <person name="Larimer F.W."/>
            <person name="Mikhailova N."/>
            <person name="Pitluck S."/>
            <person name="Pierson B.K."/>
            <person name="Blankenship R.E."/>
        </authorList>
    </citation>
    <scope>NUCLEOTIDE SEQUENCE [LARGE SCALE GENOMIC DNA]</scope>
    <source>
        <strain>ATCC 29366 / DSM 635 / J-10-fl</strain>
    </source>
</reference>
<comment type="function">
    <text evidence="1">The RuvA-RuvB-RuvC complex processes Holliday junction (HJ) DNA during genetic recombination and DNA repair, while the RuvA-RuvB complex plays an important role in the rescue of blocked DNA replication forks via replication fork reversal (RFR). RuvA specifically binds to HJ cruciform DNA, conferring on it an open structure. The RuvB hexamer acts as an ATP-dependent pump, pulling dsDNA into and through the RuvAB complex. RuvB forms 2 homohexamers on either side of HJ DNA bound by 1 or 2 RuvA tetramers; 4 subunits per hexamer contact DNA at a time. Coordinated motions by a converter formed by DNA-disengaged RuvB subunits stimulates ATP hydrolysis and nucleotide exchange. Immobilization of the converter enables RuvB to convert the ATP-contained energy into a lever motion, pulling 2 nucleotides of DNA out of the RuvA tetramer per ATP hydrolyzed, thus driving DNA branch migration. The RuvB motors rotate together with the DNA substrate, which together with the progressing nucleotide cycle form the mechanistic basis for DNA recombination by continuous HJ branch migration. Branch migration allows RuvC to scan DNA until it finds its consensus sequence, where it cleaves and resolves cruciform DNA.</text>
</comment>
<comment type="catalytic activity">
    <reaction evidence="1">
        <text>ATP + H2O = ADP + phosphate + H(+)</text>
        <dbReference type="Rhea" id="RHEA:13065"/>
        <dbReference type="ChEBI" id="CHEBI:15377"/>
        <dbReference type="ChEBI" id="CHEBI:15378"/>
        <dbReference type="ChEBI" id="CHEBI:30616"/>
        <dbReference type="ChEBI" id="CHEBI:43474"/>
        <dbReference type="ChEBI" id="CHEBI:456216"/>
    </reaction>
</comment>
<comment type="subunit">
    <text evidence="1">Homohexamer. Forms an RuvA(8)-RuvB(12)-Holliday junction (HJ) complex. HJ DNA is sandwiched between 2 RuvA tetramers; dsDNA enters through RuvA and exits via RuvB. An RuvB hexamer assembles on each DNA strand where it exits the tetramer. Each RuvB hexamer is contacted by two RuvA subunits (via domain III) on 2 adjacent RuvB subunits; this complex drives branch migration. In the full resolvosome a probable DNA-RuvA(4)-RuvB(12)-RuvC(2) complex forms which resolves the HJ.</text>
</comment>
<comment type="subcellular location">
    <subcellularLocation>
        <location evidence="1">Cytoplasm</location>
    </subcellularLocation>
</comment>
<comment type="domain">
    <text evidence="1">Has 3 domains, the large (RuvB-L) and small ATPase (RuvB-S) domains and the C-terminal head (RuvB-H) domain. The head domain binds DNA, while the ATPase domains jointly bind ATP, ADP or are empty depending on the state of the subunit in the translocation cycle. During a single DNA translocation step the structure of each domain remains the same, but their relative positions change.</text>
</comment>
<comment type="similarity">
    <text evidence="1">Belongs to the RuvB family.</text>
</comment>
<gene>
    <name evidence="1" type="primary">ruvB</name>
    <name type="ordered locus">Caur_3085</name>
</gene>
<protein>
    <recommendedName>
        <fullName evidence="1">Holliday junction branch migration complex subunit RuvB</fullName>
        <ecNumber evidence="1">3.6.4.-</ecNumber>
    </recommendedName>
</protein>